<name>PDXB_PSEU2</name>
<feature type="chain" id="PRO_0000297456" description="Erythronate-4-phosphate dehydrogenase">
    <location>
        <begin position="1"/>
        <end position="380"/>
    </location>
</feature>
<feature type="active site" evidence="1">
    <location>
        <position position="207"/>
    </location>
</feature>
<feature type="active site" evidence="1">
    <location>
        <position position="236"/>
    </location>
</feature>
<feature type="active site" description="Proton donor" evidence="1">
    <location>
        <position position="253"/>
    </location>
</feature>
<feature type="binding site" evidence="1">
    <location>
        <position position="45"/>
    </location>
    <ligand>
        <name>substrate</name>
    </ligand>
</feature>
<feature type="binding site" evidence="1">
    <location>
        <position position="66"/>
    </location>
    <ligand>
        <name>substrate</name>
    </ligand>
</feature>
<feature type="binding site" evidence="1">
    <location>
        <begin position="126"/>
        <end position="127"/>
    </location>
    <ligand>
        <name>NAD(+)</name>
        <dbReference type="ChEBI" id="CHEBI:57540"/>
    </ligand>
</feature>
<feature type="binding site" evidence="1">
    <location>
        <position position="146"/>
    </location>
    <ligand>
        <name>NAD(+)</name>
        <dbReference type="ChEBI" id="CHEBI:57540"/>
    </ligand>
</feature>
<feature type="binding site" evidence="1">
    <location>
        <position position="174"/>
    </location>
    <ligand>
        <name>NAD(+)</name>
        <dbReference type="ChEBI" id="CHEBI:57540"/>
    </ligand>
</feature>
<feature type="binding site" evidence="1">
    <location>
        <begin position="205"/>
        <end position="207"/>
    </location>
    <ligand>
        <name>NAD(+)</name>
        <dbReference type="ChEBI" id="CHEBI:57540"/>
    </ligand>
</feature>
<feature type="binding site" evidence="1">
    <location>
        <position position="231"/>
    </location>
    <ligand>
        <name>NAD(+)</name>
        <dbReference type="ChEBI" id="CHEBI:57540"/>
    </ligand>
</feature>
<feature type="binding site" evidence="1">
    <location>
        <position position="256"/>
    </location>
    <ligand>
        <name>NAD(+)</name>
        <dbReference type="ChEBI" id="CHEBI:57540"/>
    </ligand>
</feature>
<feature type="binding site" evidence="1">
    <location>
        <position position="257"/>
    </location>
    <ligand>
        <name>substrate</name>
    </ligand>
</feature>
<sequence length="380" mass="41376">MRIVADENIPLLDAFFAHFGEIHRLPGRAMDRAAVADADILLVRSVTAVTRELLEGSPVRFVGTCTIGTDHLDLDWFQQAGIQWASAPGCNARGVVDYVLGSLLTLAEIEGVDLAQRTYGVVGAGQVGARLISVLKALGWNVLVCDPPRQAAEGGDFVSLDEILQRCDVISLHTPLSKTGASPTWHLLDDARLRQLRQGAWLINASRGAVVDNAALHDVLLEREDLQAVLDVWEGEPQVNVALADLCILGTPHIAGYSLDGRQRGTAQIYQALCGFLDQPATIELDDLLPKPWLAQVSLDAACDPVWALNMLCRGVYDPRRDDADFRRSLTGDTASQRLAFDALRKQYPPRREIEGLKVRLEGESEALAQLVRALGAVLV</sequence>
<reference key="1">
    <citation type="journal article" date="2005" name="Proc. Natl. Acad. Sci. U.S.A.">
        <title>Comparison of the complete genome sequences of Pseudomonas syringae pv. syringae B728a and pv. tomato DC3000.</title>
        <authorList>
            <person name="Feil H."/>
            <person name="Feil W.S."/>
            <person name="Chain P."/>
            <person name="Larimer F."/>
            <person name="Dibartolo G."/>
            <person name="Copeland A."/>
            <person name="Lykidis A."/>
            <person name="Trong S."/>
            <person name="Nolan M."/>
            <person name="Goltsman E."/>
            <person name="Thiel J."/>
            <person name="Malfatti S."/>
            <person name="Loper J.E."/>
            <person name="Lapidus A."/>
            <person name="Detter J.C."/>
            <person name="Land M."/>
            <person name="Richardson P.M."/>
            <person name="Kyrpides N.C."/>
            <person name="Ivanova N."/>
            <person name="Lindow S.E."/>
        </authorList>
    </citation>
    <scope>NUCLEOTIDE SEQUENCE [LARGE SCALE GENOMIC DNA]</scope>
    <source>
        <strain>B728a</strain>
    </source>
</reference>
<comment type="function">
    <text evidence="1">Catalyzes the oxidation of erythronate-4-phosphate to 3-hydroxy-2-oxo-4-phosphonooxybutanoate.</text>
</comment>
<comment type="catalytic activity">
    <reaction evidence="1">
        <text>4-phospho-D-erythronate + NAD(+) = (R)-3-hydroxy-2-oxo-4-phosphooxybutanoate + NADH + H(+)</text>
        <dbReference type="Rhea" id="RHEA:18829"/>
        <dbReference type="ChEBI" id="CHEBI:15378"/>
        <dbReference type="ChEBI" id="CHEBI:57540"/>
        <dbReference type="ChEBI" id="CHEBI:57945"/>
        <dbReference type="ChEBI" id="CHEBI:58538"/>
        <dbReference type="ChEBI" id="CHEBI:58766"/>
        <dbReference type="EC" id="1.1.1.290"/>
    </reaction>
</comment>
<comment type="pathway">
    <text evidence="1">Cofactor biosynthesis; pyridoxine 5'-phosphate biosynthesis; pyridoxine 5'-phosphate from D-erythrose 4-phosphate: step 2/5.</text>
</comment>
<comment type="subunit">
    <text evidence="1">Homodimer.</text>
</comment>
<comment type="subcellular location">
    <subcellularLocation>
        <location evidence="1">Cytoplasm</location>
    </subcellularLocation>
</comment>
<comment type="similarity">
    <text evidence="1">Belongs to the D-isomer specific 2-hydroxyacid dehydrogenase family. PdxB subfamily.</text>
</comment>
<accession>Q4ZVE7</accession>
<keyword id="KW-0963">Cytoplasm</keyword>
<keyword id="KW-0520">NAD</keyword>
<keyword id="KW-0560">Oxidoreductase</keyword>
<keyword id="KW-0664">Pyridoxine biosynthesis</keyword>
<dbReference type="EC" id="1.1.1.290" evidence="1"/>
<dbReference type="EMBL" id="CP000075">
    <property type="protein sequence ID" value="AAY36875.1"/>
    <property type="molecule type" value="Genomic_DNA"/>
</dbReference>
<dbReference type="RefSeq" id="WP_011267266.1">
    <property type="nucleotide sequence ID" value="NC_007005.1"/>
</dbReference>
<dbReference type="RefSeq" id="YP_234913.1">
    <property type="nucleotide sequence ID" value="NC_007005.1"/>
</dbReference>
<dbReference type="SMR" id="Q4ZVE7"/>
<dbReference type="STRING" id="205918.Psyr_1828"/>
<dbReference type="KEGG" id="psb:Psyr_1828"/>
<dbReference type="PATRIC" id="fig|205918.7.peg.1872"/>
<dbReference type="eggNOG" id="COG0111">
    <property type="taxonomic scope" value="Bacteria"/>
</dbReference>
<dbReference type="HOGENOM" id="CLU_019796_4_0_6"/>
<dbReference type="OrthoDB" id="9770208at2"/>
<dbReference type="UniPathway" id="UPA00244">
    <property type="reaction ID" value="UER00310"/>
</dbReference>
<dbReference type="Proteomes" id="UP000000426">
    <property type="component" value="Chromosome"/>
</dbReference>
<dbReference type="GO" id="GO:0005829">
    <property type="term" value="C:cytosol"/>
    <property type="evidence" value="ECO:0007669"/>
    <property type="project" value="TreeGrafter"/>
</dbReference>
<dbReference type="GO" id="GO:0033711">
    <property type="term" value="F:4-phosphoerythronate dehydrogenase activity"/>
    <property type="evidence" value="ECO:0007669"/>
    <property type="project" value="UniProtKB-EC"/>
</dbReference>
<dbReference type="GO" id="GO:0051287">
    <property type="term" value="F:NAD binding"/>
    <property type="evidence" value="ECO:0007669"/>
    <property type="project" value="InterPro"/>
</dbReference>
<dbReference type="GO" id="GO:0046983">
    <property type="term" value="F:protein dimerization activity"/>
    <property type="evidence" value="ECO:0007669"/>
    <property type="project" value="InterPro"/>
</dbReference>
<dbReference type="GO" id="GO:0036001">
    <property type="term" value="P:'de novo' pyridoxal 5'-phosphate biosynthetic process"/>
    <property type="evidence" value="ECO:0007669"/>
    <property type="project" value="TreeGrafter"/>
</dbReference>
<dbReference type="GO" id="GO:0008615">
    <property type="term" value="P:pyridoxine biosynthetic process"/>
    <property type="evidence" value="ECO:0007669"/>
    <property type="project" value="UniProtKB-UniRule"/>
</dbReference>
<dbReference type="CDD" id="cd12158">
    <property type="entry name" value="ErythrP_dh"/>
    <property type="match status" value="1"/>
</dbReference>
<dbReference type="Gene3D" id="3.30.1370.170">
    <property type="match status" value="1"/>
</dbReference>
<dbReference type="Gene3D" id="3.40.50.720">
    <property type="entry name" value="NAD(P)-binding Rossmann-like Domain"/>
    <property type="match status" value="2"/>
</dbReference>
<dbReference type="HAMAP" id="MF_01825">
    <property type="entry name" value="PdxB"/>
    <property type="match status" value="1"/>
</dbReference>
<dbReference type="InterPro" id="IPR006139">
    <property type="entry name" value="D-isomer_2_OHA_DH_cat_dom"/>
</dbReference>
<dbReference type="InterPro" id="IPR029753">
    <property type="entry name" value="D-isomer_DH_CS"/>
</dbReference>
<dbReference type="InterPro" id="IPR006140">
    <property type="entry name" value="D-isomer_DH_NAD-bd"/>
</dbReference>
<dbReference type="InterPro" id="IPR020921">
    <property type="entry name" value="Erythronate-4-P_DHase"/>
</dbReference>
<dbReference type="InterPro" id="IPR024531">
    <property type="entry name" value="Erythronate-4-P_DHase_dimer"/>
</dbReference>
<dbReference type="InterPro" id="IPR036291">
    <property type="entry name" value="NAD(P)-bd_dom_sf"/>
</dbReference>
<dbReference type="InterPro" id="IPR038251">
    <property type="entry name" value="PdxB_dimer_sf"/>
</dbReference>
<dbReference type="NCBIfam" id="NF001309">
    <property type="entry name" value="PRK00257.1"/>
    <property type="match status" value="1"/>
</dbReference>
<dbReference type="PANTHER" id="PTHR42938">
    <property type="entry name" value="FORMATE DEHYDROGENASE 1"/>
    <property type="match status" value="1"/>
</dbReference>
<dbReference type="PANTHER" id="PTHR42938:SF9">
    <property type="entry name" value="FORMATE DEHYDROGENASE 1"/>
    <property type="match status" value="1"/>
</dbReference>
<dbReference type="Pfam" id="PF00389">
    <property type="entry name" value="2-Hacid_dh"/>
    <property type="match status" value="1"/>
</dbReference>
<dbReference type="Pfam" id="PF02826">
    <property type="entry name" value="2-Hacid_dh_C"/>
    <property type="match status" value="1"/>
</dbReference>
<dbReference type="Pfam" id="PF11890">
    <property type="entry name" value="DUF3410"/>
    <property type="match status" value="1"/>
</dbReference>
<dbReference type="SUPFAM" id="SSF52283">
    <property type="entry name" value="Formate/glycerate dehydrogenase catalytic domain-like"/>
    <property type="match status" value="1"/>
</dbReference>
<dbReference type="SUPFAM" id="SSF51735">
    <property type="entry name" value="NAD(P)-binding Rossmann-fold domains"/>
    <property type="match status" value="1"/>
</dbReference>
<dbReference type="PROSITE" id="PS00671">
    <property type="entry name" value="D_2_HYDROXYACID_DH_3"/>
    <property type="match status" value="1"/>
</dbReference>
<proteinExistence type="inferred from homology"/>
<gene>
    <name evidence="1" type="primary">pdxB</name>
    <name type="ordered locus">Psyr_1828</name>
</gene>
<organism>
    <name type="scientific">Pseudomonas syringae pv. syringae (strain B728a)</name>
    <dbReference type="NCBI Taxonomy" id="205918"/>
    <lineage>
        <taxon>Bacteria</taxon>
        <taxon>Pseudomonadati</taxon>
        <taxon>Pseudomonadota</taxon>
        <taxon>Gammaproteobacteria</taxon>
        <taxon>Pseudomonadales</taxon>
        <taxon>Pseudomonadaceae</taxon>
        <taxon>Pseudomonas</taxon>
        <taxon>Pseudomonas syringae</taxon>
    </lineage>
</organism>
<protein>
    <recommendedName>
        <fullName evidence="1">Erythronate-4-phosphate dehydrogenase</fullName>
        <ecNumber evidence="1">1.1.1.290</ecNumber>
    </recommendedName>
</protein>
<evidence type="ECO:0000255" key="1">
    <source>
        <dbReference type="HAMAP-Rule" id="MF_01825"/>
    </source>
</evidence>